<dbReference type="EMBL" id="AB008269">
    <property type="protein sequence ID" value="BAB10649.1"/>
    <property type="molecule type" value="Genomic_DNA"/>
</dbReference>
<dbReference type="EMBL" id="AB006696">
    <property type="protein sequence ID" value="BAB10649.1"/>
    <property type="status" value="JOINED"/>
    <property type="molecule type" value="Genomic_DNA"/>
</dbReference>
<dbReference type="EMBL" id="CP002688">
    <property type="protein sequence ID" value="AED97409.1"/>
    <property type="molecule type" value="Genomic_DNA"/>
</dbReference>
<dbReference type="EMBL" id="BT003950">
    <property type="protein sequence ID" value="AAO41995.1"/>
    <property type="molecule type" value="mRNA"/>
</dbReference>
<dbReference type="RefSeq" id="NP_200908.1">
    <property type="nucleotide sequence ID" value="NM_125493.4"/>
</dbReference>
<dbReference type="SMR" id="Q9FME0"/>
<dbReference type="FunCoup" id="Q9FME0">
    <property type="interactions" value="632"/>
</dbReference>
<dbReference type="STRING" id="3702.Q9FME0"/>
<dbReference type="PaxDb" id="3702-AT5G61000.1"/>
<dbReference type="ProteomicsDB" id="236994"/>
<dbReference type="EnsemblPlants" id="AT5G61000.1">
    <property type="protein sequence ID" value="AT5G61000.1"/>
    <property type="gene ID" value="AT5G61000"/>
</dbReference>
<dbReference type="GeneID" id="836221"/>
<dbReference type="Gramene" id="AT5G61000.1">
    <property type="protein sequence ID" value="AT5G61000.1"/>
    <property type="gene ID" value="AT5G61000"/>
</dbReference>
<dbReference type="KEGG" id="ath:AT5G61000"/>
<dbReference type="Araport" id="AT5G61000"/>
<dbReference type="TAIR" id="AT5G61000">
    <property type="gene designation" value="RPA70D"/>
</dbReference>
<dbReference type="eggNOG" id="KOG0851">
    <property type="taxonomic scope" value="Eukaryota"/>
</dbReference>
<dbReference type="HOGENOM" id="CLU_012393_3_1_1"/>
<dbReference type="InParanoid" id="Q9FME0"/>
<dbReference type="OMA" id="VIRAVFW"/>
<dbReference type="OrthoDB" id="1751331at2759"/>
<dbReference type="PhylomeDB" id="Q9FME0"/>
<dbReference type="PRO" id="PR:Q9FME0"/>
<dbReference type="Proteomes" id="UP000006548">
    <property type="component" value="Chromosome 5"/>
</dbReference>
<dbReference type="ExpressionAtlas" id="Q9FME0">
    <property type="expression patterns" value="baseline and differential"/>
</dbReference>
<dbReference type="GO" id="GO:0005634">
    <property type="term" value="C:nucleus"/>
    <property type="evidence" value="ECO:0007669"/>
    <property type="project" value="UniProtKB-SubCell"/>
</dbReference>
<dbReference type="GO" id="GO:0005524">
    <property type="term" value="F:ATP binding"/>
    <property type="evidence" value="ECO:0007669"/>
    <property type="project" value="UniProtKB-KW"/>
</dbReference>
<dbReference type="GO" id="GO:0003677">
    <property type="term" value="F:DNA binding"/>
    <property type="evidence" value="ECO:0007669"/>
    <property type="project" value="UniProtKB-KW"/>
</dbReference>
<dbReference type="GO" id="GO:0004386">
    <property type="term" value="F:helicase activity"/>
    <property type="evidence" value="ECO:0007669"/>
    <property type="project" value="UniProtKB-KW"/>
</dbReference>
<dbReference type="GO" id="GO:0016787">
    <property type="term" value="F:hydrolase activity"/>
    <property type="evidence" value="ECO:0007669"/>
    <property type="project" value="UniProtKB-KW"/>
</dbReference>
<dbReference type="GO" id="GO:0008270">
    <property type="term" value="F:zinc ion binding"/>
    <property type="evidence" value="ECO:0007669"/>
    <property type="project" value="UniProtKB-KW"/>
</dbReference>
<dbReference type="GO" id="GO:0006310">
    <property type="term" value="P:DNA recombination"/>
    <property type="evidence" value="ECO:0007669"/>
    <property type="project" value="UniProtKB-KW"/>
</dbReference>
<dbReference type="GO" id="GO:0006281">
    <property type="term" value="P:DNA repair"/>
    <property type="evidence" value="ECO:0007669"/>
    <property type="project" value="UniProtKB-KW"/>
</dbReference>
<dbReference type="GO" id="GO:0006260">
    <property type="term" value="P:DNA replication"/>
    <property type="evidence" value="ECO:0007669"/>
    <property type="project" value="UniProtKB-KW"/>
</dbReference>
<dbReference type="CDD" id="cd04474">
    <property type="entry name" value="RPA1_DBD_A"/>
    <property type="match status" value="1"/>
</dbReference>
<dbReference type="CDD" id="cd04475">
    <property type="entry name" value="RPA1_DBD_B"/>
    <property type="match status" value="1"/>
</dbReference>
<dbReference type="CDD" id="cd04476">
    <property type="entry name" value="RPA1_DBD_C"/>
    <property type="match status" value="1"/>
</dbReference>
<dbReference type="CDD" id="cd04477">
    <property type="entry name" value="RPA1N"/>
    <property type="match status" value="1"/>
</dbReference>
<dbReference type="FunFam" id="2.40.50.140:FF:000041">
    <property type="entry name" value="Replication protein A subunit"/>
    <property type="match status" value="1"/>
</dbReference>
<dbReference type="FunFam" id="2.40.50.140:FF:000064">
    <property type="entry name" value="Replication protein A subunit"/>
    <property type="match status" value="1"/>
</dbReference>
<dbReference type="FunFam" id="2.40.50.140:FF:000090">
    <property type="entry name" value="Replication protein A subunit"/>
    <property type="match status" value="1"/>
</dbReference>
<dbReference type="FunFam" id="2.40.50.140:FF:000257">
    <property type="entry name" value="Replication protein A subunit"/>
    <property type="match status" value="1"/>
</dbReference>
<dbReference type="Gene3D" id="2.40.50.140">
    <property type="entry name" value="Nucleic acid-binding proteins"/>
    <property type="match status" value="4"/>
</dbReference>
<dbReference type="InterPro" id="IPR047192">
    <property type="entry name" value="Euk_RPA1_DBD_C"/>
</dbReference>
<dbReference type="InterPro" id="IPR012340">
    <property type="entry name" value="NA-bd_OB-fold"/>
</dbReference>
<dbReference type="InterPro" id="IPR013955">
    <property type="entry name" value="Rep_factor-A_C"/>
</dbReference>
<dbReference type="InterPro" id="IPR007199">
    <property type="entry name" value="Rep_factor-A_N"/>
</dbReference>
<dbReference type="InterPro" id="IPR031657">
    <property type="entry name" value="REPA_OB_2"/>
</dbReference>
<dbReference type="InterPro" id="IPR004591">
    <property type="entry name" value="Rfa1"/>
</dbReference>
<dbReference type="InterPro" id="IPR003871">
    <property type="entry name" value="RFA1B/D_OB_1st"/>
</dbReference>
<dbReference type="NCBIfam" id="TIGR00617">
    <property type="entry name" value="rpa1"/>
    <property type="match status" value="1"/>
</dbReference>
<dbReference type="PANTHER" id="PTHR47165">
    <property type="entry name" value="OS03G0429900 PROTEIN"/>
    <property type="match status" value="1"/>
</dbReference>
<dbReference type="PANTHER" id="PTHR47165:SF4">
    <property type="entry name" value="OS03G0429900 PROTEIN"/>
    <property type="match status" value="1"/>
</dbReference>
<dbReference type="Pfam" id="PF02721">
    <property type="entry name" value="DUF223"/>
    <property type="match status" value="1"/>
</dbReference>
<dbReference type="Pfam" id="PF04057">
    <property type="entry name" value="Rep-A_N"/>
    <property type="match status" value="1"/>
</dbReference>
<dbReference type="Pfam" id="PF08646">
    <property type="entry name" value="Rep_fac-A_C"/>
    <property type="match status" value="1"/>
</dbReference>
<dbReference type="Pfam" id="PF16900">
    <property type="entry name" value="REPA_OB_2"/>
    <property type="match status" value="1"/>
</dbReference>
<dbReference type="SUPFAM" id="SSF50249">
    <property type="entry name" value="Nucleic acid-binding proteins"/>
    <property type="match status" value="4"/>
</dbReference>
<organism>
    <name type="scientific">Arabidopsis thaliana</name>
    <name type="common">Mouse-ear cress</name>
    <dbReference type="NCBI Taxonomy" id="3702"/>
    <lineage>
        <taxon>Eukaryota</taxon>
        <taxon>Viridiplantae</taxon>
        <taxon>Streptophyta</taxon>
        <taxon>Embryophyta</taxon>
        <taxon>Tracheophyta</taxon>
        <taxon>Spermatophyta</taxon>
        <taxon>Magnoliopsida</taxon>
        <taxon>eudicotyledons</taxon>
        <taxon>Gunneridae</taxon>
        <taxon>Pentapetalae</taxon>
        <taxon>rosids</taxon>
        <taxon>malvids</taxon>
        <taxon>Brassicales</taxon>
        <taxon>Brassicaceae</taxon>
        <taxon>Camelineae</taxon>
        <taxon>Arabidopsis</taxon>
    </lineage>
</organism>
<reference key="1">
    <citation type="journal article" date="1997" name="DNA Res.">
        <title>Structural analysis of Arabidopsis thaliana chromosome 5. III. Sequence features of the regions of 1,191,918 bp covered by seventeen physically assigned P1 clones.</title>
        <authorList>
            <person name="Nakamura Y."/>
            <person name="Sato S."/>
            <person name="Kaneko T."/>
            <person name="Kotani H."/>
            <person name="Asamizu E."/>
            <person name="Miyajima N."/>
            <person name="Tabata S."/>
        </authorList>
    </citation>
    <scope>NUCLEOTIDE SEQUENCE [LARGE SCALE GENOMIC DNA]</scope>
    <source>
        <strain>cv. Columbia</strain>
    </source>
</reference>
<reference key="2">
    <citation type="journal article" date="1997" name="DNA Res.">
        <title>Structural analysis of Arabidopsis thaliana chromosome 5. II. Sequence features of the regions of 1,044,062 bp covered by thirteen physically assigned P1 clones.</title>
        <authorList>
            <person name="Kotani H."/>
            <person name="Nakamura Y."/>
            <person name="Sato S."/>
            <person name="Kaneko T."/>
            <person name="Asamizu E."/>
            <person name="Miyajima N."/>
            <person name="Tabata S."/>
        </authorList>
    </citation>
    <scope>NUCLEOTIDE SEQUENCE [LARGE SCALE GENOMIC DNA]</scope>
    <source>
        <strain>cv. Columbia</strain>
    </source>
</reference>
<reference key="3">
    <citation type="journal article" date="2017" name="Plant J.">
        <title>Araport11: a complete reannotation of the Arabidopsis thaliana reference genome.</title>
        <authorList>
            <person name="Cheng C.Y."/>
            <person name="Krishnakumar V."/>
            <person name="Chan A.P."/>
            <person name="Thibaud-Nissen F."/>
            <person name="Schobel S."/>
            <person name="Town C.D."/>
        </authorList>
    </citation>
    <scope>GENOME REANNOTATION</scope>
    <source>
        <strain>cv. Columbia</strain>
    </source>
</reference>
<reference key="4">
    <citation type="journal article" date="2003" name="Science">
        <title>Empirical analysis of transcriptional activity in the Arabidopsis genome.</title>
        <authorList>
            <person name="Yamada K."/>
            <person name="Lim J."/>
            <person name="Dale J.M."/>
            <person name="Chen H."/>
            <person name="Shinn P."/>
            <person name="Palm C.J."/>
            <person name="Southwick A.M."/>
            <person name="Wu H.C."/>
            <person name="Kim C.J."/>
            <person name="Nguyen M."/>
            <person name="Pham P.K."/>
            <person name="Cheuk R.F."/>
            <person name="Karlin-Newmann G."/>
            <person name="Liu S.X."/>
            <person name="Lam B."/>
            <person name="Sakano H."/>
            <person name="Wu T."/>
            <person name="Yu G."/>
            <person name="Miranda M."/>
            <person name="Quach H.L."/>
            <person name="Tripp M."/>
            <person name="Chang C.H."/>
            <person name="Lee J.M."/>
            <person name="Toriumi M.J."/>
            <person name="Chan M.M."/>
            <person name="Tang C.C."/>
            <person name="Onodera C.S."/>
            <person name="Deng J.M."/>
            <person name="Akiyama K."/>
            <person name="Ansari Y."/>
            <person name="Arakawa T."/>
            <person name="Banh J."/>
            <person name="Banno F."/>
            <person name="Bowser L."/>
            <person name="Brooks S.Y."/>
            <person name="Carninci P."/>
            <person name="Chao Q."/>
            <person name="Choy N."/>
            <person name="Enju A."/>
            <person name="Goldsmith A.D."/>
            <person name="Gurjal M."/>
            <person name="Hansen N.F."/>
            <person name="Hayashizaki Y."/>
            <person name="Johnson-Hopson C."/>
            <person name="Hsuan V.W."/>
            <person name="Iida K."/>
            <person name="Karnes M."/>
            <person name="Khan S."/>
            <person name="Koesema E."/>
            <person name="Ishida J."/>
            <person name="Jiang P.X."/>
            <person name="Jones T."/>
            <person name="Kawai J."/>
            <person name="Kamiya A."/>
            <person name="Meyers C."/>
            <person name="Nakajima M."/>
            <person name="Narusaka M."/>
            <person name="Seki M."/>
            <person name="Sakurai T."/>
            <person name="Satou M."/>
            <person name="Tamse R."/>
            <person name="Vaysberg M."/>
            <person name="Wallender E.K."/>
            <person name="Wong C."/>
            <person name="Yamamura Y."/>
            <person name="Yuan S."/>
            <person name="Shinozaki K."/>
            <person name="Davis R.W."/>
            <person name="Theologis A."/>
            <person name="Ecker J.R."/>
        </authorList>
    </citation>
    <scope>NUCLEOTIDE SEQUENCE [LARGE SCALE MRNA]</scope>
    <source>
        <strain>cv. Columbia</strain>
    </source>
</reference>
<evidence type="ECO:0000250" key="1"/>
<evidence type="ECO:0000255" key="2"/>
<evidence type="ECO:0000256" key="3">
    <source>
        <dbReference type="SAM" id="MobiDB-lite"/>
    </source>
</evidence>
<evidence type="ECO:0000305" key="4"/>
<protein>
    <recommendedName>
        <fullName>Replication protein A 70 kDa DNA-binding subunit D</fullName>
        <shortName>AtRPA70D</shortName>
    </recommendedName>
    <alternativeName>
        <fullName>AtRPA1-4</fullName>
    </alternativeName>
    <alternativeName>
        <fullName>Replication factor A protein 1D</fullName>
    </alternativeName>
    <alternativeName>
        <fullName>Replication protein A 1D</fullName>
        <shortName>AtRPA1D</shortName>
    </alternativeName>
</protein>
<name>RFA1D_ARATH</name>
<accession>Q9FME0</accession>
<proteinExistence type="evidence at transcript level"/>
<gene>
    <name type="primary">RPA1D</name>
    <name type="synonym">RPA70D</name>
    <name type="ordered locus">At5g61000</name>
    <name type="ORF">MSL3.14</name>
</gene>
<feature type="chain" id="PRO_0000422618" description="Replication protein A 70 kDa DNA-binding subunit D">
    <location>
        <begin position="1"/>
        <end position="629"/>
    </location>
</feature>
<feature type="DNA-binding region" description="OB">
    <location>
        <begin position="194"/>
        <end position="280"/>
    </location>
</feature>
<feature type="zinc finger region" description="C4-type" evidence="2">
    <location>
        <begin position="492"/>
        <end position="512"/>
    </location>
</feature>
<feature type="region of interest" description="Disordered" evidence="3">
    <location>
        <begin position="112"/>
        <end position="135"/>
    </location>
</feature>
<feature type="compositionally biased region" description="Basic and acidic residues" evidence="3">
    <location>
        <begin position="115"/>
        <end position="131"/>
    </location>
</feature>
<sequence>MQTSVTPDAISTVLSNPSFDSSSDRSEIVVQVVDLKPIGNRYTFSANDGKTKVKAMFTASLTPEIISGKIQNLGLIRLIDFTVNDISSKSTKYFLVTKCEAVGSVLDSEINLDSKSGEEEAREPKKQKLEHSPVSPLNDVVSTGITLKPKQEFVAKSASQIMSEQRGNAAPAARMAMTRRVHPLVSLNPYQGNWTIKVRVTNKGVMRNYKNARGEGCVFNVELTDEEGTQIQATMFNDAARKFFDRFQLGKVYYISRGSLKLANKQFKTVQNDYEMTLNENSEVEEASSEEMFIPETKFNFVPIEELGLYVNQKELIDLIGVVQSVSPTMSIRRRTDNEMIPKRDITLADESRKTVVVSLWNDLATGIGQELLDMADQSPVIAIKSLKVGDFQGVSLSTISRSNVVINPESPEAKKLKSWFDSEGKEISMSSIGSGMSPSAKNGSRSLYTDRVLLSHITSNPSLFEEKPVFFSTRAYISFIKPDQTMWYQACKTCNKKVTEALDSGYWCEGCQRKYEECSLRYIMAVKVTDSSGETWISSFNDEAEKILGCSADELNKLKSEEGEVNEYQTKLKEATWSSHVFRVSVTQNEYNGEKRQRVTVKGVAPLDFAAETRLLLQDISNKNKTSQ</sequence>
<keyword id="KW-0067">ATP-binding</keyword>
<keyword id="KW-0227">DNA damage</keyword>
<keyword id="KW-0233">DNA recombination</keyword>
<keyword id="KW-0234">DNA repair</keyword>
<keyword id="KW-0235">DNA replication</keyword>
<keyword id="KW-0238">DNA-binding</keyword>
<keyword id="KW-0347">Helicase</keyword>
<keyword id="KW-0378">Hydrolase</keyword>
<keyword id="KW-0479">Metal-binding</keyword>
<keyword id="KW-0547">Nucleotide-binding</keyword>
<keyword id="KW-0539">Nucleus</keyword>
<keyword id="KW-1185">Reference proteome</keyword>
<keyword id="KW-0862">Zinc</keyword>
<keyword id="KW-0863">Zinc-finger</keyword>
<comment type="function">
    <text evidence="1">Component of the replication protein A complex (RPA) required for DNA recombination, repair and replication. The activity of RPA is mediated by single-stranded DNA binding and protein interactions. Probably involved in repair of double-strand DNA breaks (DSBs) induced by genotoxic stresses (By similarity).</text>
</comment>
<comment type="subunit">
    <text evidence="1">Heterotrimer of RPA1, RPA2 and RPA3 (canonical replication protein A complex).</text>
</comment>
<comment type="subcellular location">
    <subcellularLocation>
        <location evidence="1">Nucleus</location>
    </subcellularLocation>
</comment>
<comment type="similarity">
    <text evidence="4">Belongs to the replication factor A protein 1 family.</text>
</comment>